<sequence>MIQDSEFFRMEGVPITKEEIRAVSIGKLNLNPEDIVLDIGCGSGGMSVEISKRSKFVYAIDNSEDAKNTTVTNLKKFKIENCEVFLGDAKDLISEFDFNKVFIGGTQNIEQILEILKEKKIEKVVANTIVLENSVKIISKFEELRYNVDFVNVSVSYGKKINSGHIMLSKNPITIITATLK</sequence>
<protein>
    <recommendedName>
        <fullName evidence="1">Probable cobalt-precorrin-6B C(15)-methyltransferase (decarboxylating)</fullName>
        <ecNumber evidence="1">2.1.1.196</ecNumber>
    </recommendedName>
</protein>
<dbReference type="EC" id="2.1.1.196" evidence="1"/>
<dbReference type="EMBL" id="CP000745">
    <property type="protein sequence ID" value="ABR65537.1"/>
    <property type="molecule type" value="Genomic_DNA"/>
</dbReference>
<dbReference type="SMR" id="A6VGG1"/>
<dbReference type="STRING" id="426368.MmarC7_0468"/>
<dbReference type="KEGG" id="mmz:MmarC7_0468"/>
<dbReference type="eggNOG" id="arCOG00977">
    <property type="taxonomic scope" value="Archaea"/>
</dbReference>
<dbReference type="HOGENOM" id="CLU_094143_0_0_2"/>
<dbReference type="OrthoDB" id="6027at2157"/>
<dbReference type="UniPathway" id="UPA00148">
    <property type="reaction ID" value="UER00229"/>
</dbReference>
<dbReference type="GO" id="GO:0043776">
    <property type="term" value="F:cobalt-precorrin-6B C5-methyltransferase activity"/>
    <property type="evidence" value="ECO:0007669"/>
    <property type="project" value="RHEA"/>
</dbReference>
<dbReference type="GO" id="GO:0008276">
    <property type="term" value="F:protein methyltransferase activity"/>
    <property type="evidence" value="ECO:0007669"/>
    <property type="project" value="InterPro"/>
</dbReference>
<dbReference type="GO" id="GO:0019251">
    <property type="term" value="P:anaerobic cobalamin biosynthetic process"/>
    <property type="evidence" value="ECO:0007669"/>
    <property type="project" value="UniProtKB-UniRule"/>
</dbReference>
<dbReference type="GO" id="GO:0032259">
    <property type="term" value="P:methylation"/>
    <property type="evidence" value="ECO:0007669"/>
    <property type="project" value="UniProtKB-KW"/>
</dbReference>
<dbReference type="CDD" id="cd02440">
    <property type="entry name" value="AdoMet_MTases"/>
    <property type="match status" value="1"/>
</dbReference>
<dbReference type="Gene3D" id="3.40.50.150">
    <property type="entry name" value="Vaccinia Virus protein VP39"/>
    <property type="match status" value="1"/>
</dbReference>
<dbReference type="HAMAP" id="MF_00786">
    <property type="entry name" value="CbiT"/>
    <property type="match status" value="1"/>
</dbReference>
<dbReference type="InterPro" id="IPR023475">
    <property type="entry name" value="CbiT"/>
</dbReference>
<dbReference type="InterPro" id="IPR014008">
    <property type="entry name" value="Cbl_synth_MTase_CbiT"/>
</dbReference>
<dbReference type="InterPro" id="IPR050714">
    <property type="entry name" value="Cobalamin_biosynth_MTase"/>
</dbReference>
<dbReference type="InterPro" id="IPR041698">
    <property type="entry name" value="Methyltransf_25"/>
</dbReference>
<dbReference type="InterPro" id="IPR029063">
    <property type="entry name" value="SAM-dependent_MTases_sf"/>
</dbReference>
<dbReference type="NCBIfam" id="TIGR02469">
    <property type="entry name" value="CbiT"/>
    <property type="match status" value="1"/>
</dbReference>
<dbReference type="PANTHER" id="PTHR43182">
    <property type="entry name" value="COBALT-PRECORRIN-6B C(15)-METHYLTRANSFERASE (DECARBOXYLATING)"/>
    <property type="match status" value="1"/>
</dbReference>
<dbReference type="PANTHER" id="PTHR43182:SF1">
    <property type="entry name" value="COBALT-PRECORRIN-7 C(5)-METHYLTRANSFERASE"/>
    <property type="match status" value="1"/>
</dbReference>
<dbReference type="Pfam" id="PF13649">
    <property type="entry name" value="Methyltransf_25"/>
    <property type="match status" value="1"/>
</dbReference>
<dbReference type="SUPFAM" id="SSF53335">
    <property type="entry name" value="S-adenosyl-L-methionine-dependent methyltransferases"/>
    <property type="match status" value="1"/>
</dbReference>
<proteinExistence type="inferred from homology"/>
<name>CBIT_METM7</name>
<feature type="chain" id="PRO_1000046843" description="Probable cobalt-precorrin-6B C(15)-methyltransferase (decarboxylating)">
    <location>
        <begin position="1"/>
        <end position="181"/>
    </location>
</feature>
<feature type="binding site" evidence="1">
    <location>
        <position position="16"/>
    </location>
    <ligand>
        <name>S-adenosyl-L-methionine</name>
        <dbReference type="ChEBI" id="CHEBI:59789"/>
    </ligand>
</feature>
<feature type="binding site" evidence="1">
    <location>
        <begin position="40"/>
        <end position="44"/>
    </location>
    <ligand>
        <name>S-adenosyl-L-methionine</name>
        <dbReference type="ChEBI" id="CHEBI:59789"/>
    </ligand>
</feature>
<feature type="binding site" evidence="1">
    <location>
        <position position="61"/>
    </location>
    <ligand>
        <name>S-adenosyl-L-methionine</name>
        <dbReference type="ChEBI" id="CHEBI:59789"/>
    </ligand>
</feature>
<feature type="binding site" evidence="1">
    <location>
        <position position="89"/>
    </location>
    <ligand>
        <name>S-adenosyl-L-methionine</name>
        <dbReference type="ChEBI" id="CHEBI:59789"/>
    </ligand>
</feature>
<gene>
    <name evidence="1" type="primary">cbiT</name>
    <name type="ordered locus">MmarC7_0468</name>
</gene>
<organism>
    <name type="scientific">Methanococcus maripaludis (strain C7 / ATCC BAA-1331)</name>
    <dbReference type="NCBI Taxonomy" id="426368"/>
    <lineage>
        <taxon>Archaea</taxon>
        <taxon>Methanobacteriati</taxon>
        <taxon>Methanobacteriota</taxon>
        <taxon>Methanomada group</taxon>
        <taxon>Methanococci</taxon>
        <taxon>Methanococcales</taxon>
        <taxon>Methanococcaceae</taxon>
        <taxon>Methanococcus</taxon>
    </lineage>
</organism>
<accession>A6VGG1</accession>
<comment type="function">
    <text evidence="1">Catalyzes the methylation of C-15 in cobalt-precorrin-6B followed by the decarboxylation of C-12 to form cobalt-precorrin-7.</text>
</comment>
<comment type="catalytic activity">
    <reaction evidence="1">
        <text>Co-precorrin-6B + S-adenosyl-L-methionine = Co-precorrin-7 + S-adenosyl-L-homocysteine + CO2</text>
        <dbReference type="Rhea" id="RHEA:36067"/>
        <dbReference type="ChEBI" id="CHEBI:16526"/>
        <dbReference type="ChEBI" id="CHEBI:57856"/>
        <dbReference type="ChEBI" id="CHEBI:59789"/>
        <dbReference type="ChEBI" id="CHEBI:70791"/>
        <dbReference type="ChEBI" id="CHEBI:72780"/>
        <dbReference type="EC" id="2.1.1.196"/>
    </reaction>
</comment>
<comment type="pathway">
    <text evidence="1">Cofactor biosynthesis; adenosylcobalamin biosynthesis; cob(II)yrinate a,c-diamide from sirohydrochlorin (anaerobic route): step 8/10.</text>
</comment>
<comment type="similarity">
    <text evidence="1">Belongs to the methyltransferase superfamily. Archaeal-type CbiT family.</text>
</comment>
<keyword id="KW-0169">Cobalamin biosynthesis</keyword>
<keyword id="KW-0489">Methyltransferase</keyword>
<keyword id="KW-0949">S-adenosyl-L-methionine</keyword>
<keyword id="KW-0808">Transferase</keyword>
<evidence type="ECO:0000255" key="1">
    <source>
        <dbReference type="HAMAP-Rule" id="MF_00786"/>
    </source>
</evidence>
<reference key="1">
    <citation type="submission" date="2007-06" db="EMBL/GenBank/DDBJ databases">
        <title>Complete sequence of Methanococcus maripaludis C7.</title>
        <authorList>
            <consortium name="US DOE Joint Genome Institute"/>
            <person name="Copeland A."/>
            <person name="Lucas S."/>
            <person name="Lapidus A."/>
            <person name="Barry K."/>
            <person name="Glavina del Rio T."/>
            <person name="Dalin E."/>
            <person name="Tice H."/>
            <person name="Pitluck S."/>
            <person name="Clum A."/>
            <person name="Schmutz J."/>
            <person name="Larimer F."/>
            <person name="Land M."/>
            <person name="Hauser L."/>
            <person name="Kyrpides N."/>
            <person name="Anderson I."/>
            <person name="Sieprawska-Lupa M."/>
            <person name="Whitman W.B."/>
            <person name="Richardson P."/>
        </authorList>
    </citation>
    <scope>NUCLEOTIDE SEQUENCE [LARGE SCALE GENOMIC DNA]</scope>
    <source>
        <strain>C7 / ATCC BAA-1331</strain>
    </source>
</reference>